<keyword id="KW-1003">Cell membrane</keyword>
<keyword id="KW-0472">Membrane</keyword>
<keyword id="KW-1185">Reference proteome</keyword>
<keyword id="KW-0812">Transmembrane</keyword>
<keyword id="KW-1133">Transmembrane helix</keyword>
<comment type="subcellular location">
    <subcellularLocation>
        <location evidence="2">Cell membrane</location>
        <topology evidence="2">Multi-pass membrane protein</topology>
    </subcellularLocation>
</comment>
<protein>
    <recommendedName>
        <fullName>Uncharacterized protein PM1469</fullName>
    </recommendedName>
</protein>
<accession>Q9CKY2</accession>
<reference key="1">
    <citation type="journal article" date="2001" name="Proc. Natl. Acad. Sci. U.S.A.">
        <title>Complete genomic sequence of Pasteurella multocida Pm70.</title>
        <authorList>
            <person name="May B.J."/>
            <person name="Zhang Q."/>
            <person name="Li L.L."/>
            <person name="Paustian M.L."/>
            <person name="Whittam T.S."/>
            <person name="Kapur V."/>
        </authorList>
    </citation>
    <scope>NUCLEOTIDE SEQUENCE [LARGE SCALE GENOMIC DNA]</scope>
    <source>
        <strain>Pm70</strain>
    </source>
</reference>
<evidence type="ECO:0000255" key="1"/>
<evidence type="ECO:0000305" key="2"/>
<organism>
    <name type="scientific">Pasteurella multocida (strain Pm70)</name>
    <dbReference type="NCBI Taxonomy" id="272843"/>
    <lineage>
        <taxon>Bacteria</taxon>
        <taxon>Pseudomonadati</taxon>
        <taxon>Pseudomonadota</taxon>
        <taxon>Gammaproteobacteria</taxon>
        <taxon>Pasteurellales</taxon>
        <taxon>Pasteurellaceae</taxon>
        <taxon>Pasteurella</taxon>
    </lineage>
</organism>
<sequence>MNIIQSFTHRLSDLIKQYPLAMSFIFISTAFIPWIQDESISRDMIVVLLLPIYFSTVLLLNKRKYANGLAIAYAILITLAFYFAERPIYDNDAYWGLLLIHFVLFVTYPLAKENRLFVYNTVSRLTQLALAIVLAGIICICAVLVLNSIEYLFNINLLSYRIVPKTLLFIMCFFTPVFFLIFEQRLAQNFQGERFHYVIELIVNFIFSPVVILYTLIVYLYLAKILFYFELPKGGVAYIIMPYIALGLCCQGLRLLLIDAKWTGFYRVFAYLSIAPLVLLWVGIHTRITTYGLTEIRVMLVVLASMMTLFILFSMTQRLQQYRLFSLTACLLLFISTILTSPYYLAQQHQLARFERLLSELNILDEQQQISATIFDSQFAKQLSSEQVEKYKQLEEIIGGYIKTNPVAVAKYGQEKLNYLHGFYYNQIIYNTPYQDEEASITFYAYDTRRQDNYTIDIAPYQTLHLINGYVNSGDPNERETQTQETSTLFQRQFDLIDKHNKYSFDEHYFVEVFKAAGLDIHQKYSQDTLLPLAKELTQVPTREGGLLIFRDMDFKYEVHGDIKGYVYQGGYIEFYLAP</sequence>
<feature type="chain" id="PRO_0000216325" description="Uncharacterized protein PM1469">
    <location>
        <begin position="1"/>
        <end position="579"/>
    </location>
</feature>
<feature type="transmembrane region" description="Helical" evidence="1">
    <location>
        <begin position="13"/>
        <end position="35"/>
    </location>
</feature>
<feature type="transmembrane region" description="Helical" evidence="1">
    <location>
        <begin position="39"/>
        <end position="61"/>
    </location>
</feature>
<feature type="transmembrane region" description="Helical" evidence="1">
    <location>
        <begin position="66"/>
        <end position="83"/>
    </location>
</feature>
<feature type="transmembrane region" description="Helical" evidence="1">
    <location>
        <begin position="93"/>
        <end position="110"/>
    </location>
</feature>
<feature type="transmembrane region" description="Helical" evidence="1">
    <location>
        <begin position="130"/>
        <end position="152"/>
    </location>
</feature>
<feature type="transmembrane region" description="Helical" evidence="1">
    <location>
        <begin position="162"/>
        <end position="181"/>
    </location>
</feature>
<feature type="transmembrane region" description="Helical" evidence="1">
    <location>
        <begin position="201"/>
        <end position="223"/>
    </location>
</feature>
<feature type="transmembrane region" description="Helical" evidence="1">
    <location>
        <begin position="238"/>
        <end position="257"/>
    </location>
</feature>
<feature type="transmembrane region" description="Helical" evidence="1">
    <location>
        <begin position="264"/>
        <end position="286"/>
    </location>
</feature>
<feature type="transmembrane region" description="Helical" evidence="1">
    <location>
        <begin position="296"/>
        <end position="315"/>
    </location>
</feature>
<feature type="transmembrane region" description="Helical" evidence="1">
    <location>
        <begin position="324"/>
        <end position="346"/>
    </location>
</feature>
<name>Y1469_PASMU</name>
<dbReference type="EMBL" id="AE004439">
    <property type="protein sequence ID" value="AAK03553.1"/>
    <property type="molecule type" value="Genomic_DNA"/>
</dbReference>
<dbReference type="RefSeq" id="WP_010907180.1">
    <property type="nucleotide sequence ID" value="NC_002663.1"/>
</dbReference>
<dbReference type="STRING" id="272843.PM1469"/>
<dbReference type="EnsemblBacteria" id="AAK03553">
    <property type="protein sequence ID" value="AAK03553"/>
    <property type="gene ID" value="PM1469"/>
</dbReference>
<dbReference type="KEGG" id="pmu:PM1469"/>
<dbReference type="PATRIC" id="fig|272843.6.peg.1485"/>
<dbReference type="HOGENOM" id="CLU_032629_0_0_6"/>
<dbReference type="OrthoDB" id="5677648at2"/>
<dbReference type="Proteomes" id="UP000000809">
    <property type="component" value="Chromosome"/>
</dbReference>
<dbReference type="GO" id="GO:0005886">
    <property type="term" value="C:plasma membrane"/>
    <property type="evidence" value="ECO:0007669"/>
    <property type="project" value="UniProtKB-SubCell"/>
</dbReference>
<dbReference type="InterPro" id="IPR025291">
    <property type="entry name" value="DUF4153"/>
</dbReference>
<dbReference type="Pfam" id="PF13687">
    <property type="entry name" value="DUF4153"/>
    <property type="match status" value="1"/>
</dbReference>
<proteinExistence type="predicted"/>
<gene>
    <name type="ordered locus">PM1469</name>
</gene>